<dbReference type="EC" id="4.6.1.16" evidence="2"/>
<dbReference type="EMBL" id="AE017261">
    <property type="protein sequence ID" value="AAT43103.1"/>
    <property type="molecule type" value="Genomic_DNA"/>
</dbReference>
<dbReference type="RefSeq" id="WP_011177319.1">
    <property type="nucleotide sequence ID" value="NC_005877.1"/>
</dbReference>
<dbReference type="SMR" id="Q6L1P9"/>
<dbReference type="STRING" id="263820.PTO0518"/>
<dbReference type="PaxDb" id="263820-PTO0518"/>
<dbReference type="GeneID" id="25392590"/>
<dbReference type="KEGG" id="pto:PTO0518"/>
<dbReference type="eggNOG" id="arCOG01701">
    <property type="taxonomic scope" value="Archaea"/>
</dbReference>
<dbReference type="HOGENOM" id="CLU_965070_0_0_2"/>
<dbReference type="InParanoid" id="Q6L1P9"/>
<dbReference type="OrthoDB" id="46045at2157"/>
<dbReference type="Proteomes" id="UP000000438">
    <property type="component" value="Chromosome"/>
</dbReference>
<dbReference type="GO" id="GO:0016829">
    <property type="term" value="F:lyase activity"/>
    <property type="evidence" value="ECO:0007669"/>
    <property type="project" value="UniProtKB-KW"/>
</dbReference>
<dbReference type="GO" id="GO:0003676">
    <property type="term" value="F:nucleic acid binding"/>
    <property type="evidence" value="ECO:0007669"/>
    <property type="project" value="InterPro"/>
</dbReference>
<dbReference type="GO" id="GO:0000213">
    <property type="term" value="F:tRNA-intron endonuclease activity"/>
    <property type="evidence" value="ECO:0007669"/>
    <property type="project" value="UniProtKB-UniRule"/>
</dbReference>
<dbReference type="GO" id="GO:0006388">
    <property type="term" value="P:tRNA splicing, via endonucleolytic cleavage and ligation"/>
    <property type="evidence" value="ECO:0007669"/>
    <property type="project" value="UniProtKB-UniRule"/>
</dbReference>
<dbReference type="CDD" id="cd22363">
    <property type="entry name" value="tRNA-intron_lyase_C"/>
    <property type="match status" value="1"/>
</dbReference>
<dbReference type="Gene3D" id="3.40.1350.10">
    <property type="match status" value="1"/>
</dbReference>
<dbReference type="HAMAP" id="MF_01834">
    <property type="entry name" value="EndA_long"/>
    <property type="match status" value="1"/>
</dbReference>
<dbReference type="InterPro" id="IPR011856">
    <property type="entry name" value="tRNA_endonuc-like_dom_sf"/>
</dbReference>
<dbReference type="InterPro" id="IPR036167">
    <property type="entry name" value="tRNA_intron_Endo_cat-like_sf"/>
</dbReference>
<dbReference type="InterPro" id="IPR006677">
    <property type="entry name" value="tRNA_intron_Endonuc_cat-like"/>
</dbReference>
<dbReference type="InterPro" id="IPR006676">
    <property type="entry name" value="tRNA_splic"/>
</dbReference>
<dbReference type="InterPro" id="IPR023516">
    <property type="entry name" value="tRNA_splic_arch_long"/>
</dbReference>
<dbReference type="NCBIfam" id="TIGR00324">
    <property type="entry name" value="endA"/>
    <property type="match status" value="1"/>
</dbReference>
<dbReference type="NCBIfam" id="NF006797">
    <property type="entry name" value="PRK09300.1-5"/>
    <property type="match status" value="1"/>
</dbReference>
<dbReference type="Pfam" id="PF01974">
    <property type="entry name" value="tRNA_int_endo"/>
    <property type="match status" value="1"/>
</dbReference>
<dbReference type="SUPFAM" id="SSF53032">
    <property type="entry name" value="tRNA-intron endonuclease catalytic domain-like"/>
    <property type="match status" value="1"/>
</dbReference>
<keyword id="KW-0456">Lyase</keyword>
<keyword id="KW-0819">tRNA processing</keyword>
<comment type="function">
    <text evidence="1">Endonuclease that removes tRNA introns. Cleaves pre-tRNA at the 5'- and 3'-splice sites to release the intron. The products are an intron and two tRNA half-molecules bearing 2',3' cyclic phosphate and 5'-OH termini. Recognizes a pseudosymmetric substrate in which 2 bulged loops of 3 bases are separated by a stem of 4 bp (By similarity).</text>
</comment>
<comment type="catalytic activity">
    <reaction evidence="2">
        <text>pretRNA = a 3'-half-tRNA molecule with a 5'-OH end + a 5'-half-tRNA molecule with a 2',3'-cyclic phosphate end + an intron with a 2',3'-cyclic phosphate and a 5'-hydroxyl terminus.</text>
        <dbReference type="EC" id="4.6.1.16"/>
    </reaction>
</comment>
<comment type="subunit">
    <text evidence="2">Homodimer.</text>
</comment>
<comment type="similarity">
    <text evidence="2">Belongs to the tRNA-intron endonuclease family. Archaeal long subfamily.</text>
</comment>
<name>ENDA_PICTO</name>
<protein>
    <recommendedName>
        <fullName evidence="2">tRNA-splicing endonuclease</fullName>
        <ecNumber evidence="2">4.6.1.16</ecNumber>
    </recommendedName>
    <alternativeName>
        <fullName evidence="2">tRNA-intron endonuclease</fullName>
    </alternativeName>
</protein>
<feature type="chain" id="PRO_0000109489" description="tRNA-splicing endonuclease">
    <location>
        <begin position="1"/>
        <end position="284"/>
    </location>
</feature>
<feature type="active site" evidence="2">
    <location>
        <position position="222"/>
    </location>
</feature>
<feature type="active site" evidence="2">
    <location>
        <position position="229"/>
    </location>
</feature>
<feature type="active site" evidence="2">
    <location>
        <position position="257"/>
    </location>
</feature>
<proteinExistence type="inferred from homology"/>
<reference key="1">
    <citation type="journal article" date="2004" name="Proc. Natl. Acad. Sci. U.S.A.">
        <title>Genome sequence of Picrophilus torridus and its implications for life around pH 0.</title>
        <authorList>
            <person name="Fuetterer O."/>
            <person name="Angelov A."/>
            <person name="Liesegang H."/>
            <person name="Gottschalk G."/>
            <person name="Schleper C."/>
            <person name="Schepers B."/>
            <person name="Dock C."/>
            <person name="Antranikian G."/>
            <person name="Liebl W."/>
        </authorList>
    </citation>
    <scope>NUCLEOTIDE SEQUENCE [LARGE SCALE GENOMIC DNA]</scope>
    <source>
        <strain>ATCC 700027 / DSM 9790 / JCM 10055 / NBRC 100828 / KAW 2/3</strain>
    </source>
</reference>
<accession>Q6L1P9</accession>
<evidence type="ECO:0000250" key="1"/>
<evidence type="ECO:0000255" key="2">
    <source>
        <dbReference type="HAMAP-Rule" id="MF_01834"/>
    </source>
</evidence>
<organism>
    <name type="scientific">Picrophilus torridus (strain ATCC 700027 / DSM 9790 / JCM 10055 / NBRC 100828 / KAW 2/3)</name>
    <dbReference type="NCBI Taxonomy" id="1122961"/>
    <lineage>
        <taxon>Archaea</taxon>
        <taxon>Methanobacteriati</taxon>
        <taxon>Thermoplasmatota</taxon>
        <taxon>Thermoplasmata</taxon>
        <taxon>Thermoplasmatales</taxon>
        <taxon>Picrophilaceae</taxon>
        <taxon>Picrophilus</taxon>
    </lineage>
</organism>
<sequence length="284" mass="33533">MDYIIEDGFHFDIKNGKSPSYLINKYRTGHVIGNVYLLNKYEAFYLYLKNKISIDDEFFNGNIKFYMAYENLIGSGLYVKILNDCFMCRKSRNSRYKKVRFMPDDILLSFKDLYSDDSNIYITVDEEYESVYYSMERIDIKGSRKDDFSAASIDVSSGAYFGMNCPEWFGIDFHGKRLLNDYEIRFLNNDVKSNVDVIYKDLIKRGFIVKSGFKYGSNFRIYKNSMNEHSDYLVNYMDHDLWYVIARAVRLASNVRKRLIISGIIDNDPVYIKIERIKDIKTIL</sequence>
<gene>
    <name evidence="2" type="primary">endA</name>
    <name type="ordered locus">PTO0518</name>
</gene>